<accession>Q7V9Q3</accession>
<reference key="1">
    <citation type="journal article" date="2003" name="Proc. Natl. Acad. Sci. U.S.A.">
        <title>Genome sequence of the cyanobacterium Prochlorococcus marinus SS120, a nearly minimal oxyphototrophic genome.</title>
        <authorList>
            <person name="Dufresne A."/>
            <person name="Salanoubat M."/>
            <person name="Partensky F."/>
            <person name="Artiguenave F."/>
            <person name="Axmann I.M."/>
            <person name="Barbe V."/>
            <person name="Duprat S."/>
            <person name="Galperin M.Y."/>
            <person name="Koonin E.V."/>
            <person name="Le Gall F."/>
            <person name="Makarova K.S."/>
            <person name="Ostrowski M."/>
            <person name="Oztas S."/>
            <person name="Robert C."/>
            <person name="Rogozin I.B."/>
            <person name="Scanlan D.J."/>
            <person name="Tandeau de Marsac N."/>
            <person name="Weissenbach J."/>
            <person name="Wincker P."/>
            <person name="Wolf Y.I."/>
            <person name="Hess W.R."/>
        </authorList>
    </citation>
    <scope>NUCLEOTIDE SEQUENCE [LARGE SCALE GENOMIC DNA]</scope>
    <source>
        <strain>SARG / CCMP1375 / SS120</strain>
    </source>
</reference>
<name>SSRP_PROMA</name>
<feature type="chain" id="PRO_0000103005" description="SsrA-binding protein">
    <location>
        <begin position="1"/>
        <end position="165"/>
    </location>
</feature>
<feature type="region of interest" description="Disordered" evidence="2">
    <location>
        <begin position="141"/>
        <end position="165"/>
    </location>
</feature>
<feature type="compositionally biased region" description="Basic and acidic residues" evidence="2">
    <location>
        <begin position="144"/>
        <end position="159"/>
    </location>
</feature>
<keyword id="KW-0963">Cytoplasm</keyword>
<keyword id="KW-1185">Reference proteome</keyword>
<keyword id="KW-0694">RNA-binding</keyword>
<sequence>MSKARNNKKSKLSKAKSNRRLAENRYARHQYEILEDIEAGIELLGTEVKSIRAGNVNLRDGFCLIREGSLLLHNVHISPFNNAGSFFNHEPLRVRKLLAHRKEINKLETQVNRKGLTLVPLNIFLKGSWIKITIGLGKGRKLHDKRENEKRKQSEREVKSALARY</sequence>
<gene>
    <name evidence="1" type="primary">smpB</name>
    <name type="ordered locus">Pro_1776</name>
</gene>
<proteinExistence type="inferred from homology"/>
<evidence type="ECO:0000255" key="1">
    <source>
        <dbReference type="HAMAP-Rule" id="MF_00023"/>
    </source>
</evidence>
<evidence type="ECO:0000256" key="2">
    <source>
        <dbReference type="SAM" id="MobiDB-lite"/>
    </source>
</evidence>
<organism>
    <name type="scientific">Prochlorococcus marinus (strain SARG / CCMP1375 / SS120)</name>
    <dbReference type="NCBI Taxonomy" id="167539"/>
    <lineage>
        <taxon>Bacteria</taxon>
        <taxon>Bacillati</taxon>
        <taxon>Cyanobacteriota</taxon>
        <taxon>Cyanophyceae</taxon>
        <taxon>Synechococcales</taxon>
        <taxon>Prochlorococcaceae</taxon>
        <taxon>Prochlorococcus</taxon>
    </lineage>
</organism>
<dbReference type="EMBL" id="AE017126">
    <property type="protein sequence ID" value="AAQ00820.1"/>
    <property type="molecule type" value="Genomic_DNA"/>
</dbReference>
<dbReference type="RefSeq" id="NP_876167.1">
    <property type="nucleotide sequence ID" value="NC_005042.1"/>
</dbReference>
<dbReference type="RefSeq" id="WP_011125925.1">
    <property type="nucleotide sequence ID" value="NC_005042.1"/>
</dbReference>
<dbReference type="SMR" id="Q7V9Q3"/>
<dbReference type="STRING" id="167539.Pro_1776"/>
<dbReference type="EnsemblBacteria" id="AAQ00820">
    <property type="protein sequence ID" value="AAQ00820"/>
    <property type="gene ID" value="Pro_1776"/>
</dbReference>
<dbReference type="KEGG" id="pma:Pro_1776"/>
<dbReference type="PATRIC" id="fig|167539.5.peg.1876"/>
<dbReference type="eggNOG" id="COG0691">
    <property type="taxonomic scope" value="Bacteria"/>
</dbReference>
<dbReference type="HOGENOM" id="CLU_108953_0_1_3"/>
<dbReference type="OrthoDB" id="9805462at2"/>
<dbReference type="Proteomes" id="UP000001420">
    <property type="component" value="Chromosome"/>
</dbReference>
<dbReference type="GO" id="GO:0005829">
    <property type="term" value="C:cytosol"/>
    <property type="evidence" value="ECO:0007669"/>
    <property type="project" value="TreeGrafter"/>
</dbReference>
<dbReference type="GO" id="GO:0003723">
    <property type="term" value="F:RNA binding"/>
    <property type="evidence" value="ECO:0007669"/>
    <property type="project" value="UniProtKB-UniRule"/>
</dbReference>
<dbReference type="GO" id="GO:0070929">
    <property type="term" value="P:trans-translation"/>
    <property type="evidence" value="ECO:0007669"/>
    <property type="project" value="UniProtKB-UniRule"/>
</dbReference>
<dbReference type="CDD" id="cd09294">
    <property type="entry name" value="SmpB"/>
    <property type="match status" value="1"/>
</dbReference>
<dbReference type="Gene3D" id="2.40.280.10">
    <property type="match status" value="1"/>
</dbReference>
<dbReference type="HAMAP" id="MF_00023">
    <property type="entry name" value="SmpB"/>
    <property type="match status" value="1"/>
</dbReference>
<dbReference type="InterPro" id="IPR023620">
    <property type="entry name" value="SmpB"/>
</dbReference>
<dbReference type="InterPro" id="IPR000037">
    <property type="entry name" value="SsrA-bd_prot"/>
</dbReference>
<dbReference type="InterPro" id="IPR020081">
    <property type="entry name" value="SsrA-bd_prot_CS"/>
</dbReference>
<dbReference type="NCBIfam" id="NF003843">
    <property type="entry name" value="PRK05422.1"/>
    <property type="match status" value="1"/>
</dbReference>
<dbReference type="NCBIfam" id="TIGR00086">
    <property type="entry name" value="smpB"/>
    <property type="match status" value="1"/>
</dbReference>
<dbReference type="PANTHER" id="PTHR30308:SF2">
    <property type="entry name" value="SSRA-BINDING PROTEIN"/>
    <property type="match status" value="1"/>
</dbReference>
<dbReference type="PANTHER" id="PTHR30308">
    <property type="entry name" value="TMRNA-BINDING COMPONENT OF TRANS-TRANSLATION TAGGING COMPLEX"/>
    <property type="match status" value="1"/>
</dbReference>
<dbReference type="Pfam" id="PF01668">
    <property type="entry name" value="SmpB"/>
    <property type="match status" value="1"/>
</dbReference>
<dbReference type="SUPFAM" id="SSF74982">
    <property type="entry name" value="Small protein B (SmpB)"/>
    <property type="match status" value="1"/>
</dbReference>
<dbReference type="PROSITE" id="PS01317">
    <property type="entry name" value="SSRP"/>
    <property type="match status" value="1"/>
</dbReference>
<protein>
    <recommendedName>
        <fullName evidence="1">SsrA-binding protein</fullName>
    </recommendedName>
    <alternativeName>
        <fullName evidence="1">Small protein B</fullName>
    </alternativeName>
</protein>
<comment type="function">
    <text evidence="1">Required for rescue of stalled ribosomes mediated by trans-translation. Binds to transfer-messenger RNA (tmRNA), required for stable association of tmRNA with ribosomes. tmRNA and SmpB together mimic tRNA shape, replacing the anticodon stem-loop with SmpB. tmRNA is encoded by the ssrA gene; the 2 termini fold to resemble tRNA(Ala) and it encodes a 'tag peptide', a short internal open reading frame. During trans-translation Ala-aminoacylated tmRNA acts like a tRNA, entering the A-site of stalled ribosomes, displacing the stalled mRNA. The ribosome then switches to translate the ORF on the tmRNA; the nascent peptide is terminated with the 'tag peptide' encoded by the tmRNA and targeted for degradation. The ribosome is freed to recommence translation, which seems to be the essential function of trans-translation.</text>
</comment>
<comment type="subcellular location">
    <subcellularLocation>
        <location evidence="1">Cytoplasm</location>
    </subcellularLocation>
    <text evidence="1">The tmRNA-SmpB complex associates with stalled 70S ribosomes.</text>
</comment>
<comment type="similarity">
    <text evidence="1">Belongs to the SmpB family.</text>
</comment>